<comment type="function">
    <text evidence="1">Transcriptional repressor that controls expression of the genes required for the catabolism of sialic acids.</text>
</comment>
<comment type="similarity">
    <text evidence="1">Belongs to the NanR family.</text>
</comment>
<dbReference type="EMBL" id="CP000653">
    <property type="protein sequence ID" value="ABP62319.1"/>
    <property type="molecule type" value="Genomic_DNA"/>
</dbReference>
<dbReference type="RefSeq" id="WP_015960643.1">
    <property type="nucleotide sequence ID" value="NC_009436.1"/>
</dbReference>
<dbReference type="SMR" id="A4WF39"/>
<dbReference type="STRING" id="399742.Ent638_3662"/>
<dbReference type="KEGG" id="ent:Ent638_3662"/>
<dbReference type="eggNOG" id="COG2186">
    <property type="taxonomic scope" value="Bacteria"/>
</dbReference>
<dbReference type="HOGENOM" id="CLU_017584_9_1_6"/>
<dbReference type="OrthoDB" id="7005926at2"/>
<dbReference type="Proteomes" id="UP000000230">
    <property type="component" value="Chromosome"/>
</dbReference>
<dbReference type="GO" id="GO:0003677">
    <property type="term" value="F:DNA binding"/>
    <property type="evidence" value="ECO:0007669"/>
    <property type="project" value="UniProtKB-KW"/>
</dbReference>
<dbReference type="GO" id="GO:0003700">
    <property type="term" value="F:DNA-binding transcription factor activity"/>
    <property type="evidence" value="ECO:0007669"/>
    <property type="project" value="UniProtKB-UniRule"/>
</dbReference>
<dbReference type="GO" id="GO:0045892">
    <property type="term" value="P:negative regulation of DNA-templated transcription"/>
    <property type="evidence" value="ECO:0007669"/>
    <property type="project" value="UniProtKB-UniRule"/>
</dbReference>
<dbReference type="CDD" id="cd07377">
    <property type="entry name" value="WHTH_GntR"/>
    <property type="match status" value="1"/>
</dbReference>
<dbReference type="Gene3D" id="1.20.120.530">
    <property type="entry name" value="GntR ligand-binding domain-like"/>
    <property type="match status" value="1"/>
</dbReference>
<dbReference type="Gene3D" id="1.10.10.10">
    <property type="entry name" value="Winged helix-like DNA-binding domain superfamily/Winged helix DNA-binding domain"/>
    <property type="match status" value="1"/>
</dbReference>
<dbReference type="HAMAP" id="MF_01236">
    <property type="entry name" value="HTH_NanR"/>
    <property type="match status" value="1"/>
</dbReference>
<dbReference type="InterPro" id="IPR011711">
    <property type="entry name" value="GntR_C"/>
</dbReference>
<dbReference type="InterPro" id="IPR008920">
    <property type="entry name" value="TF_FadR/GntR_C"/>
</dbReference>
<dbReference type="InterPro" id="IPR000524">
    <property type="entry name" value="Tscrpt_reg_HTH_GntR"/>
</dbReference>
<dbReference type="InterPro" id="IPR023730">
    <property type="entry name" value="Tscrpt_reg_NanR"/>
</dbReference>
<dbReference type="InterPro" id="IPR036388">
    <property type="entry name" value="WH-like_DNA-bd_sf"/>
</dbReference>
<dbReference type="InterPro" id="IPR036390">
    <property type="entry name" value="WH_DNA-bd_sf"/>
</dbReference>
<dbReference type="NCBIfam" id="NF003011">
    <property type="entry name" value="PRK03837.1"/>
    <property type="match status" value="1"/>
</dbReference>
<dbReference type="PANTHER" id="PTHR43537:SF53">
    <property type="entry name" value="HTH-TYPE TRANSCRIPTIONAL REPRESSOR NANR"/>
    <property type="match status" value="1"/>
</dbReference>
<dbReference type="PANTHER" id="PTHR43537">
    <property type="entry name" value="TRANSCRIPTIONAL REGULATOR, GNTR FAMILY"/>
    <property type="match status" value="1"/>
</dbReference>
<dbReference type="Pfam" id="PF07729">
    <property type="entry name" value="FCD"/>
    <property type="match status" value="1"/>
</dbReference>
<dbReference type="Pfam" id="PF00392">
    <property type="entry name" value="GntR"/>
    <property type="match status" value="1"/>
</dbReference>
<dbReference type="PRINTS" id="PR00035">
    <property type="entry name" value="HTHGNTR"/>
</dbReference>
<dbReference type="SMART" id="SM00895">
    <property type="entry name" value="FCD"/>
    <property type="match status" value="1"/>
</dbReference>
<dbReference type="SMART" id="SM00345">
    <property type="entry name" value="HTH_GNTR"/>
    <property type="match status" value="1"/>
</dbReference>
<dbReference type="SUPFAM" id="SSF48008">
    <property type="entry name" value="GntR ligand-binding domain-like"/>
    <property type="match status" value="1"/>
</dbReference>
<dbReference type="SUPFAM" id="SSF46785">
    <property type="entry name" value="Winged helix' DNA-binding domain"/>
    <property type="match status" value="1"/>
</dbReference>
<dbReference type="PROSITE" id="PS50949">
    <property type="entry name" value="HTH_GNTR"/>
    <property type="match status" value="1"/>
</dbReference>
<sequence length="260" mass="29406">MKPIDLQAENSTETVGRSLRRRPLARKKLSDMVEEELEQMIRRQEFAQGEQLPSERELMEFFNVGRPSVREALAALKRKGLVQINNGERARVSMPSADTIIGELSGMAKDFLTQPGGITHFEQLRLFFESSLVRYAAEFATDEQVESLSKALEINSQSLSDNALFIRSDVDFHRVLAEIPGNPIFMAIHVALLDWLIAARPKVSDAELYEHNNVSYRQHIAIVDAIRRHDPDEADRALQSHLNSVSATWHAFGQGSKKKK</sequence>
<name>NANR_ENT38</name>
<feature type="chain" id="PRO_0000415300" description="HTH-type transcriptional repressor NanR">
    <location>
        <begin position="1"/>
        <end position="260"/>
    </location>
</feature>
<feature type="domain" description="HTH gntR-type" evidence="1">
    <location>
        <begin position="27"/>
        <end position="95"/>
    </location>
</feature>
<feature type="DNA-binding region" description="H-T-H motif" evidence="1">
    <location>
        <begin position="55"/>
        <end position="74"/>
    </location>
</feature>
<protein>
    <recommendedName>
        <fullName evidence="1">HTH-type transcriptional repressor NanR</fullName>
    </recommendedName>
</protein>
<proteinExistence type="inferred from homology"/>
<organism>
    <name type="scientific">Enterobacter sp. (strain 638)</name>
    <dbReference type="NCBI Taxonomy" id="399742"/>
    <lineage>
        <taxon>Bacteria</taxon>
        <taxon>Pseudomonadati</taxon>
        <taxon>Pseudomonadota</taxon>
        <taxon>Gammaproteobacteria</taxon>
        <taxon>Enterobacterales</taxon>
        <taxon>Enterobacteriaceae</taxon>
        <taxon>Enterobacter</taxon>
    </lineage>
</organism>
<evidence type="ECO:0000255" key="1">
    <source>
        <dbReference type="HAMAP-Rule" id="MF_01236"/>
    </source>
</evidence>
<reference key="1">
    <citation type="journal article" date="2010" name="PLoS Genet.">
        <title>Genome sequence of the plant growth promoting endophytic bacterium Enterobacter sp. 638.</title>
        <authorList>
            <person name="Taghavi S."/>
            <person name="van der Lelie D."/>
            <person name="Hoffman A."/>
            <person name="Zhang Y.B."/>
            <person name="Walla M.D."/>
            <person name="Vangronsveld J."/>
            <person name="Newman L."/>
            <person name="Monchy S."/>
        </authorList>
    </citation>
    <scope>NUCLEOTIDE SEQUENCE [LARGE SCALE GENOMIC DNA]</scope>
    <source>
        <strain>638</strain>
    </source>
</reference>
<accession>A4WF39</accession>
<gene>
    <name evidence="1" type="primary">nanR</name>
    <name type="ordered locus">Ent638_3662</name>
</gene>
<keyword id="KW-0238">DNA-binding</keyword>
<keyword id="KW-0678">Repressor</keyword>
<keyword id="KW-0804">Transcription</keyword>
<keyword id="KW-0805">Transcription regulation</keyword>